<gene>
    <name type="primary">OR4S2</name>
    <name type="synonym">OR4S2P</name>
</gene>
<evidence type="ECO:0000255" key="1"/>
<evidence type="ECO:0000255" key="2">
    <source>
        <dbReference type="PROSITE-ProRule" id="PRU00521"/>
    </source>
</evidence>
<evidence type="ECO:0000305" key="3"/>
<sequence length="311" mass="35172">MEKINNVTEFIFWGLSQSPEIEKVCFVVFSFFYIIILLGNLLIMLTVCLSNLFKSPMYFFLSFLSFVDICYSSVTAPKMIVDLLAKDKTISYVGCMLQLFGVHFFGCTEIFILTVMAYDRYVAICKPLHYMTIMNRETCNKMLLGTWVGGFLHSIIQVALVVQLPFCGPNEIDHYFCDVHPVLKLACTETYIVGVVVTANSGTIALGSFVILLISYSIILVSLRKQSAEGRRKALSTCGSHIAMVVIFFGPCTFMYMRPDTTFSEDKMVAVFYTIITPMLNPLIYTLRNAEVKNAMKKLWGRNVFLEAKGK</sequence>
<accession>Q8NH73</accession>
<accession>Q6IF72</accession>
<reference key="1">
    <citation type="submission" date="2001-07" db="EMBL/GenBank/DDBJ databases">
        <title>Genome-wide discovery and analysis of human seven transmembrane helix receptor genes.</title>
        <authorList>
            <person name="Suwa M."/>
            <person name="Sato T."/>
            <person name="Okouchi I."/>
            <person name="Arita M."/>
            <person name="Futami K."/>
            <person name="Matsumoto S."/>
            <person name="Tsutsumi S."/>
            <person name="Aburatani H."/>
            <person name="Asai K."/>
            <person name="Akiyama Y."/>
        </authorList>
    </citation>
    <scope>NUCLEOTIDE SEQUENCE [GENOMIC DNA]</scope>
</reference>
<reference key="2">
    <citation type="journal article" date="2006" name="Nature">
        <title>Human chromosome 11 DNA sequence and analysis including novel gene identification.</title>
        <authorList>
            <person name="Taylor T.D."/>
            <person name="Noguchi H."/>
            <person name="Totoki Y."/>
            <person name="Toyoda A."/>
            <person name="Kuroki Y."/>
            <person name="Dewar K."/>
            <person name="Lloyd C."/>
            <person name="Itoh T."/>
            <person name="Takeda T."/>
            <person name="Kim D.-W."/>
            <person name="She X."/>
            <person name="Barlow K.F."/>
            <person name="Bloom T."/>
            <person name="Bruford E."/>
            <person name="Chang J.L."/>
            <person name="Cuomo C.A."/>
            <person name="Eichler E."/>
            <person name="FitzGerald M.G."/>
            <person name="Jaffe D.B."/>
            <person name="LaButti K."/>
            <person name="Nicol R."/>
            <person name="Park H.-S."/>
            <person name="Seaman C."/>
            <person name="Sougnez C."/>
            <person name="Yang X."/>
            <person name="Zimmer A.R."/>
            <person name="Zody M.C."/>
            <person name="Birren B.W."/>
            <person name="Nusbaum C."/>
            <person name="Fujiyama A."/>
            <person name="Hattori M."/>
            <person name="Rogers J."/>
            <person name="Lander E.S."/>
            <person name="Sakaki Y."/>
        </authorList>
    </citation>
    <scope>NUCLEOTIDE SEQUENCE [LARGE SCALE GENOMIC DNA]</scope>
</reference>
<reference key="3">
    <citation type="journal article" date="2004" name="Proc. Natl. Acad. Sci. U.S.A.">
        <title>The human olfactory receptor gene family.</title>
        <authorList>
            <person name="Malnic B."/>
            <person name="Godfrey P.A."/>
            <person name="Buck L.B."/>
        </authorList>
    </citation>
    <scope>IDENTIFICATION</scope>
</reference>
<reference key="4">
    <citation type="journal article" date="2004" name="Proc. Natl. Acad. Sci. U.S.A.">
        <authorList>
            <person name="Malnic B."/>
            <person name="Godfrey P.A."/>
            <person name="Buck L.B."/>
        </authorList>
    </citation>
    <scope>ERRATUM OF PUBMED:14983052</scope>
</reference>
<organism>
    <name type="scientific">Homo sapiens</name>
    <name type="common">Human</name>
    <dbReference type="NCBI Taxonomy" id="9606"/>
    <lineage>
        <taxon>Eukaryota</taxon>
        <taxon>Metazoa</taxon>
        <taxon>Chordata</taxon>
        <taxon>Craniata</taxon>
        <taxon>Vertebrata</taxon>
        <taxon>Euteleostomi</taxon>
        <taxon>Mammalia</taxon>
        <taxon>Eutheria</taxon>
        <taxon>Euarchontoglires</taxon>
        <taxon>Primates</taxon>
        <taxon>Haplorrhini</taxon>
        <taxon>Catarrhini</taxon>
        <taxon>Hominidae</taxon>
        <taxon>Homo</taxon>
    </lineage>
</organism>
<feature type="chain" id="PRO_0000150569" description="Olfactory receptor 4S2">
    <location>
        <begin position="1"/>
        <end position="311"/>
    </location>
</feature>
<feature type="topological domain" description="Extracellular" evidence="1">
    <location>
        <begin position="1"/>
        <end position="23"/>
    </location>
</feature>
<feature type="transmembrane region" description="Helical; Name=1" evidence="1">
    <location>
        <begin position="24"/>
        <end position="47"/>
    </location>
</feature>
<feature type="topological domain" description="Cytoplasmic" evidence="1">
    <location>
        <begin position="48"/>
        <end position="55"/>
    </location>
</feature>
<feature type="transmembrane region" description="Helical; Name=2" evidence="1">
    <location>
        <begin position="56"/>
        <end position="77"/>
    </location>
</feature>
<feature type="topological domain" description="Extracellular" evidence="1">
    <location>
        <begin position="78"/>
        <end position="98"/>
    </location>
</feature>
<feature type="transmembrane region" description="Helical; Name=3" evidence="1">
    <location>
        <begin position="99"/>
        <end position="118"/>
    </location>
</feature>
<feature type="topological domain" description="Cytoplasmic" evidence="1">
    <location>
        <begin position="119"/>
        <end position="137"/>
    </location>
</feature>
<feature type="transmembrane region" description="Helical; Name=4" evidence="1">
    <location>
        <begin position="138"/>
        <end position="156"/>
    </location>
</feature>
<feature type="topological domain" description="Extracellular" evidence="1">
    <location>
        <begin position="157"/>
        <end position="193"/>
    </location>
</feature>
<feature type="transmembrane region" description="Helical; Name=5" evidence="1">
    <location>
        <begin position="194"/>
        <end position="217"/>
    </location>
</feature>
<feature type="topological domain" description="Cytoplasmic" evidence="1">
    <location>
        <begin position="218"/>
        <end position="233"/>
    </location>
</feature>
<feature type="transmembrane region" description="Helical; Name=6" evidence="1">
    <location>
        <begin position="234"/>
        <end position="256"/>
    </location>
</feature>
<feature type="topological domain" description="Extracellular" evidence="1">
    <location>
        <begin position="257"/>
        <end position="267"/>
    </location>
</feature>
<feature type="transmembrane region" description="Helical; Name=7" evidence="1">
    <location>
        <begin position="268"/>
        <end position="287"/>
    </location>
</feature>
<feature type="topological domain" description="Cytoplasmic" evidence="1">
    <location>
        <begin position="288"/>
        <end position="311"/>
    </location>
</feature>
<feature type="glycosylation site" description="N-linked (GlcNAc...) asparagine" evidence="1">
    <location>
        <position position="6"/>
    </location>
</feature>
<feature type="disulfide bond" evidence="2">
    <location>
        <begin position="95"/>
        <end position="187"/>
    </location>
</feature>
<feature type="sequence variant" id="VAR_057547" description="In dbSNP:rs17146960.">
    <original>S</original>
    <variation>T</variation>
    <location>
        <position position="72"/>
    </location>
</feature>
<feature type="sequence variant" id="VAR_057548" description="In dbSNP:rs7949664.">
    <original>V</original>
    <variation>G</variation>
    <location>
        <position position="195"/>
    </location>
</feature>
<feature type="sequence conflict" description="In Ref. 1; BAC05764." evidence="3" ref="1">
    <original>F</original>
    <variation>L</variation>
    <location>
        <position position="100"/>
    </location>
</feature>
<proteinExistence type="inferred from homology"/>
<name>OR4S2_HUMAN</name>
<keyword id="KW-1003">Cell membrane</keyword>
<keyword id="KW-1015">Disulfide bond</keyword>
<keyword id="KW-0297">G-protein coupled receptor</keyword>
<keyword id="KW-0325">Glycoprotein</keyword>
<keyword id="KW-0472">Membrane</keyword>
<keyword id="KW-0552">Olfaction</keyword>
<keyword id="KW-0675">Receptor</keyword>
<keyword id="KW-1185">Reference proteome</keyword>
<keyword id="KW-0716">Sensory transduction</keyword>
<keyword id="KW-0807">Transducer</keyword>
<keyword id="KW-0812">Transmembrane</keyword>
<keyword id="KW-1133">Transmembrane helix</keyword>
<dbReference type="EMBL" id="AB065516">
    <property type="protein sequence ID" value="BAC05764.1"/>
    <property type="molecule type" value="Genomic_DNA"/>
</dbReference>
<dbReference type="EMBL" id="AP006437">
    <property type="status" value="NOT_ANNOTATED_CDS"/>
    <property type="molecule type" value="Genomic_DNA"/>
</dbReference>
<dbReference type="EMBL" id="BK004390">
    <property type="protein sequence ID" value="DAA04788.1"/>
    <property type="molecule type" value="Genomic_DNA"/>
</dbReference>
<dbReference type="CCDS" id="CCDS31505.1"/>
<dbReference type="RefSeq" id="NP_001004059.2">
    <property type="nucleotide sequence ID" value="NM_001004059.3"/>
</dbReference>
<dbReference type="SMR" id="Q8NH73"/>
<dbReference type="BioGRID" id="128532">
    <property type="interactions" value="3"/>
</dbReference>
<dbReference type="FunCoup" id="Q8NH73">
    <property type="interactions" value="417"/>
</dbReference>
<dbReference type="STRING" id="9606.ENSP00000493389"/>
<dbReference type="GlyCosmos" id="Q8NH73">
    <property type="glycosylation" value="1 site, No reported glycans"/>
</dbReference>
<dbReference type="GlyGen" id="Q8NH73">
    <property type="glycosylation" value="1 site"/>
</dbReference>
<dbReference type="iPTMnet" id="Q8NH73"/>
<dbReference type="PhosphoSitePlus" id="Q8NH73"/>
<dbReference type="BioMuta" id="OR4S2"/>
<dbReference type="DMDM" id="296439253"/>
<dbReference type="jPOST" id="Q8NH73"/>
<dbReference type="MassIVE" id="Q8NH73"/>
<dbReference type="PaxDb" id="9606-ENSP00000310337"/>
<dbReference type="Antibodypedia" id="66621">
    <property type="antibodies" value="70 antibodies from 17 providers"/>
</dbReference>
<dbReference type="DNASU" id="219431"/>
<dbReference type="Ensembl" id="ENST00000641692.1">
    <property type="protein sequence ID" value="ENSP00000493389.1"/>
    <property type="gene ID" value="ENSG00000174982.4"/>
</dbReference>
<dbReference type="GeneID" id="219431"/>
<dbReference type="KEGG" id="hsa:219431"/>
<dbReference type="MANE-Select" id="ENST00000641692.1">
    <property type="protein sequence ID" value="ENSP00000493389.1"/>
    <property type="RefSeq nucleotide sequence ID" value="NM_001004059.3"/>
    <property type="RefSeq protein sequence ID" value="NP_001004059.2"/>
</dbReference>
<dbReference type="UCSC" id="uc001nhs.1">
    <property type="organism name" value="human"/>
</dbReference>
<dbReference type="AGR" id="HGNC:15183"/>
<dbReference type="CTD" id="219431"/>
<dbReference type="DisGeNET" id="219431"/>
<dbReference type="GeneCards" id="OR4S2"/>
<dbReference type="HGNC" id="HGNC:15183">
    <property type="gene designation" value="OR4S2"/>
</dbReference>
<dbReference type="HPA" id="ENSG00000174982">
    <property type="expression patterns" value="Not detected"/>
</dbReference>
<dbReference type="neXtProt" id="NX_Q8NH73"/>
<dbReference type="OpenTargets" id="ENSG00000174982"/>
<dbReference type="PharmGKB" id="PA32345"/>
<dbReference type="VEuPathDB" id="HostDB:ENSG00000174982"/>
<dbReference type="eggNOG" id="ENOG502RCGN">
    <property type="taxonomic scope" value="Eukaryota"/>
</dbReference>
<dbReference type="GeneTree" id="ENSGT00940000161123"/>
<dbReference type="HOGENOM" id="CLU_012526_8_1_1"/>
<dbReference type="InParanoid" id="Q8NH73"/>
<dbReference type="OMA" id="IEKVCFV"/>
<dbReference type="OrthoDB" id="10017003at2759"/>
<dbReference type="PAN-GO" id="Q8NH73">
    <property type="GO annotations" value="2 GO annotations based on evolutionary models"/>
</dbReference>
<dbReference type="PhylomeDB" id="Q8NH73"/>
<dbReference type="TreeFam" id="TF336512"/>
<dbReference type="PathwayCommons" id="Q8NH73"/>
<dbReference type="Reactome" id="R-HSA-9752946">
    <property type="pathway name" value="Expression and translocation of olfactory receptors"/>
</dbReference>
<dbReference type="BioGRID-ORCS" id="219431">
    <property type="hits" value="9 hits in 710 CRISPR screens"/>
</dbReference>
<dbReference type="GeneWiki" id="OR4S2"/>
<dbReference type="GenomeRNAi" id="219431"/>
<dbReference type="Pharos" id="Q8NH73">
    <property type="development level" value="Tdark"/>
</dbReference>
<dbReference type="PRO" id="PR:Q8NH73"/>
<dbReference type="Proteomes" id="UP000005640">
    <property type="component" value="Chromosome 11"/>
</dbReference>
<dbReference type="RNAct" id="Q8NH73">
    <property type="molecule type" value="protein"/>
</dbReference>
<dbReference type="ExpressionAtlas" id="Q8NH73">
    <property type="expression patterns" value="differential"/>
</dbReference>
<dbReference type="GO" id="GO:0005886">
    <property type="term" value="C:plasma membrane"/>
    <property type="evidence" value="ECO:0000318"/>
    <property type="project" value="GO_Central"/>
</dbReference>
<dbReference type="GO" id="GO:0004930">
    <property type="term" value="F:G protein-coupled receptor activity"/>
    <property type="evidence" value="ECO:0007669"/>
    <property type="project" value="UniProtKB-KW"/>
</dbReference>
<dbReference type="GO" id="GO:0004984">
    <property type="term" value="F:olfactory receptor activity"/>
    <property type="evidence" value="ECO:0000318"/>
    <property type="project" value="GO_Central"/>
</dbReference>
<dbReference type="CDD" id="cd15939">
    <property type="entry name" value="7tmA_OR4A-like"/>
    <property type="match status" value="1"/>
</dbReference>
<dbReference type="FunFam" id="1.20.1070.10:FF:000007">
    <property type="entry name" value="Olfactory receptor"/>
    <property type="match status" value="1"/>
</dbReference>
<dbReference type="Gene3D" id="1.20.1070.10">
    <property type="entry name" value="Rhodopsin 7-helix transmembrane proteins"/>
    <property type="match status" value="1"/>
</dbReference>
<dbReference type="InterPro" id="IPR000276">
    <property type="entry name" value="GPCR_Rhodpsn"/>
</dbReference>
<dbReference type="InterPro" id="IPR017452">
    <property type="entry name" value="GPCR_Rhodpsn_7TM"/>
</dbReference>
<dbReference type="InterPro" id="IPR000725">
    <property type="entry name" value="Olfact_rcpt"/>
</dbReference>
<dbReference type="InterPro" id="IPR050427">
    <property type="entry name" value="Olfactory_Receptors"/>
</dbReference>
<dbReference type="PANTHER" id="PTHR48002">
    <property type="entry name" value="OLFACTORY RECEPTOR"/>
    <property type="match status" value="1"/>
</dbReference>
<dbReference type="Pfam" id="PF13853">
    <property type="entry name" value="7tm_4"/>
    <property type="match status" value="1"/>
</dbReference>
<dbReference type="PRINTS" id="PR00237">
    <property type="entry name" value="GPCRRHODOPSN"/>
</dbReference>
<dbReference type="PRINTS" id="PR00245">
    <property type="entry name" value="OLFACTORYR"/>
</dbReference>
<dbReference type="SUPFAM" id="SSF81321">
    <property type="entry name" value="Family A G protein-coupled receptor-like"/>
    <property type="match status" value="1"/>
</dbReference>
<dbReference type="PROSITE" id="PS00237">
    <property type="entry name" value="G_PROTEIN_RECEP_F1_1"/>
    <property type="match status" value="1"/>
</dbReference>
<dbReference type="PROSITE" id="PS50262">
    <property type="entry name" value="G_PROTEIN_RECEP_F1_2"/>
    <property type="match status" value="1"/>
</dbReference>
<comment type="function">
    <text evidence="3">Odorant receptor.</text>
</comment>
<comment type="subcellular location">
    <subcellularLocation>
        <location>Cell membrane</location>
        <topology>Multi-pass membrane protein</topology>
    </subcellularLocation>
</comment>
<comment type="similarity">
    <text evidence="2">Belongs to the G-protein coupled receptor 1 family.</text>
</comment>
<comment type="online information" name="Human Olfactory Receptor Data Exploratorium (HORDE)">
    <link uri="http://genome.weizmann.ac.il/horde/card/index/symbol:OR4S2"/>
</comment>
<protein>
    <recommendedName>
        <fullName>Olfactory receptor 4S2</fullName>
    </recommendedName>
    <alternativeName>
        <fullName>Olfactory receptor OR11-137</fullName>
    </alternativeName>
</protein>